<proteinExistence type="inferred from homology"/>
<evidence type="ECO:0000255" key="1">
    <source>
        <dbReference type="HAMAP-Rule" id="MF_01704"/>
    </source>
</evidence>
<evidence type="ECO:0000305" key="2"/>
<name>NODI_RHIJ3</name>
<reference key="1">
    <citation type="journal article" date="2006" name="Genome Biol.">
        <title>The genome of Rhizobium leguminosarum has recognizable core and accessory components.</title>
        <authorList>
            <person name="Young J.P.W."/>
            <person name="Crossman L.C."/>
            <person name="Johnston A.W.B."/>
            <person name="Thomson N.R."/>
            <person name="Ghazoui Z.F."/>
            <person name="Hull K.H."/>
            <person name="Wexler M."/>
            <person name="Curson A.R.J."/>
            <person name="Todd J.D."/>
            <person name="Poole P.S."/>
            <person name="Mauchline T.H."/>
            <person name="East A.K."/>
            <person name="Quail M.A."/>
            <person name="Churcher C."/>
            <person name="Arrowsmith C."/>
            <person name="Cherevach I."/>
            <person name="Chillingworth T."/>
            <person name="Clarke K."/>
            <person name="Cronin A."/>
            <person name="Davis P."/>
            <person name="Fraser A."/>
            <person name="Hance Z."/>
            <person name="Hauser H."/>
            <person name="Jagels K."/>
            <person name="Moule S."/>
            <person name="Mungall K."/>
            <person name="Norbertczak H."/>
            <person name="Rabbinowitsch E."/>
            <person name="Sanders M."/>
            <person name="Simmonds M."/>
            <person name="Whitehead S."/>
            <person name="Parkhill J."/>
        </authorList>
    </citation>
    <scope>NUCLEOTIDE SEQUENCE [LARGE SCALE GENOMIC DNA]</scope>
    <source>
        <strain>DSM 114642 / LMG 32736 / 3841</strain>
    </source>
</reference>
<accession>Q1M7W6</accession>
<dbReference type="EC" id="7.6.2.-" evidence="1"/>
<dbReference type="EMBL" id="AM236084">
    <property type="protein sequence ID" value="CAK10412.1"/>
    <property type="status" value="ALT_INIT"/>
    <property type="molecule type" value="Genomic_DNA"/>
</dbReference>
<dbReference type="SMR" id="Q1M7W6"/>
<dbReference type="EnsemblBacteria" id="CAK10412">
    <property type="protein sequence ID" value="CAK10412"/>
    <property type="gene ID" value="pRL100188"/>
</dbReference>
<dbReference type="KEGG" id="rle:pRL100188"/>
<dbReference type="HOGENOM" id="CLU_000604_1_2_5"/>
<dbReference type="Proteomes" id="UP000006575">
    <property type="component" value="Plasmid pRL10"/>
</dbReference>
<dbReference type="GO" id="GO:0005886">
    <property type="term" value="C:plasma membrane"/>
    <property type="evidence" value="ECO:0007669"/>
    <property type="project" value="UniProtKB-SubCell"/>
</dbReference>
<dbReference type="GO" id="GO:0005524">
    <property type="term" value="F:ATP binding"/>
    <property type="evidence" value="ECO:0007669"/>
    <property type="project" value="UniProtKB-KW"/>
</dbReference>
<dbReference type="GO" id="GO:0016887">
    <property type="term" value="F:ATP hydrolysis activity"/>
    <property type="evidence" value="ECO:0007669"/>
    <property type="project" value="InterPro"/>
</dbReference>
<dbReference type="GO" id="GO:0022857">
    <property type="term" value="F:transmembrane transporter activity"/>
    <property type="evidence" value="ECO:0007669"/>
    <property type="project" value="InterPro"/>
</dbReference>
<dbReference type="CDD" id="cd03263">
    <property type="entry name" value="ABC_subfamily_A"/>
    <property type="match status" value="1"/>
</dbReference>
<dbReference type="FunFam" id="3.40.50.300:FF:000589">
    <property type="entry name" value="ABC transporter, ATP-binding subunit"/>
    <property type="match status" value="1"/>
</dbReference>
<dbReference type="Gene3D" id="3.40.50.300">
    <property type="entry name" value="P-loop containing nucleotide triphosphate hydrolases"/>
    <property type="match status" value="1"/>
</dbReference>
<dbReference type="InterPro" id="IPR003593">
    <property type="entry name" value="AAA+_ATPase"/>
</dbReference>
<dbReference type="InterPro" id="IPR003439">
    <property type="entry name" value="ABC_transporter-like_ATP-bd"/>
</dbReference>
<dbReference type="InterPro" id="IPR017871">
    <property type="entry name" value="ABC_transporter-like_CS"/>
</dbReference>
<dbReference type="InterPro" id="IPR050763">
    <property type="entry name" value="ABC_transporter_ATP-binding"/>
</dbReference>
<dbReference type="InterPro" id="IPR005978">
    <property type="entry name" value="ABC_transptNodI"/>
</dbReference>
<dbReference type="InterPro" id="IPR027417">
    <property type="entry name" value="P-loop_NTPase"/>
</dbReference>
<dbReference type="NCBIfam" id="TIGR01288">
    <property type="entry name" value="nodI"/>
    <property type="match status" value="1"/>
</dbReference>
<dbReference type="NCBIfam" id="NF010059">
    <property type="entry name" value="PRK13536.1"/>
    <property type="match status" value="1"/>
</dbReference>
<dbReference type="PANTHER" id="PTHR42711">
    <property type="entry name" value="ABC TRANSPORTER ATP-BINDING PROTEIN"/>
    <property type="match status" value="1"/>
</dbReference>
<dbReference type="PANTHER" id="PTHR42711:SF5">
    <property type="entry name" value="ABC TRANSPORTER ATP-BINDING PROTEIN NATA"/>
    <property type="match status" value="1"/>
</dbReference>
<dbReference type="Pfam" id="PF00005">
    <property type="entry name" value="ABC_tran"/>
    <property type="match status" value="1"/>
</dbReference>
<dbReference type="SMART" id="SM00382">
    <property type="entry name" value="AAA"/>
    <property type="match status" value="1"/>
</dbReference>
<dbReference type="SUPFAM" id="SSF52540">
    <property type="entry name" value="P-loop containing nucleoside triphosphate hydrolases"/>
    <property type="match status" value="1"/>
</dbReference>
<dbReference type="PROSITE" id="PS00211">
    <property type="entry name" value="ABC_TRANSPORTER_1"/>
    <property type="match status" value="1"/>
</dbReference>
<dbReference type="PROSITE" id="PS50893">
    <property type="entry name" value="ABC_TRANSPORTER_2"/>
    <property type="match status" value="1"/>
</dbReference>
<dbReference type="PROSITE" id="PS51240">
    <property type="entry name" value="NODI"/>
    <property type="match status" value="1"/>
</dbReference>
<protein>
    <recommendedName>
        <fullName evidence="1">Nod factor export ATP-binding protein I</fullName>
        <ecNumber evidence="1">7.6.2.-</ecNumber>
    </recommendedName>
    <alternativeName>
        <fullName evidence="1">Nodulation ATP-binding protein I</fullName>
    </alternativeName>
</protein>
<sequence length="311" mass="34400">MDSPSGSLSPVAIDLAGVSKSYGGKIVVNDLSFTIAAGECFGLLGPNGAGKSTITRMILGMTSPSVGKITVLGAQEPGQVRLARAKIGIVSQFDNLDLEFTVRENLLVYGRYFRMSTREIETVIPSLLEFARLESKANTRVADLSGGMKRRLTLARALINDPQLLILDEPTTGLDPHARHLIWERLRSLLARGKTILLTTHIMEEAERLCDRLCVLEAGRKIAEGRPHALIEEQIGCPVIEIYGGDPQELSLLIRPNARRLEISGETLFCYTPDPEQVRAQLRAYSNLRLLERPPNLEDVFLRLTGREMEK</sequence>
<keyword id="KW-0067">ATP-binding</keyword>
<keyword id="KW-0997">Cell inner membrane</keyword>
<keyword id="KW-1003">Cell membrane</keyword>
<keyword id="KW-0472">Membrane</keyword>
<keyword id="KW-0536">Nodulation</keyword>
<keyword id="KW-0547">Nucleotide-binding</keyword>
<keyword id="KW-0614">Plasmid</keyword>
<keyword id="KW-1278">Translocase</keyword>
<keyword id="KW-0813">Transport</keyword>
<gene>
    <name evidence="1" type="primary">nodI</name>
    <name type="ordered locus">pRL100188</name>
</gene>
<comment type="function">
    <text evidence="1">Part of the ABC transporter complex NodIJ involved in the export of the nodulation factors (Nod factors), the bacterial signal molecules that induce symbiosis and subsequent nodulation induction. Nod factors are LCO (lipo-chitin oligosaccharide), a modified beta-1,4-linked N-acetylglucosamine oligosaccharide. This subunit is responsible for energy coupling to the transport system.</text>
</comment>
<comment type="subunit">
    <text evidence="1">The complex is composed of two ATP-binding proteins (NodI) and two transmembrane proteins (NodJ).</text>
</comment>
<comment type="subcellular location">
    <subcellularLocation>
        <location evidence="1">Cell inner membrane</location>
        <topology evidence="1">Peripheral membrane protein</topology>
    </subcellularLocation>
</comment>
<comment type="similarity">
    <text evidence="1">Belongs to the ABC transporter superfamily. Lipooligosaccharide exporter (TC 3.A.1.102) family.</text>
</comment>
<comment type="sequence caution" evidence="2">
    <conflict type="erroneous initiation">
        <sequence resource="EMBL-CDS" id="CAK10412"/>
    </conflict>
</comment>
<organism>
    <name type="scientific">Rhizobium johnstonii (strain DSM 114642 / LMG 32736 / 3841)</name>
    <name type="common">Rhizobium leguminosarum bv. viciae</name>
    <dbReference type="NCBI Taxonomy" id="216596"/>
    <lineage>
        <taxon>Bacteria</taxon>
        <taxon>Pseudomonadati</taxon>
        <taxon>Pseudomonadota</taxon>
        <taxon>Alphaproteobacteria</taxon>
        <taxon>Hyphomicrobiales</taxon>
        <taxon>Rhizobiaceae</taxon>
        <taxon>Rhizobium/Agrobacterium group</taxon>
        <taxon>Rhizobium</taxon>
        <taxon>Rhizobium johnstonii</taxon>
    </lineage>
</organism>
<geneLocation type="plasmid">
    <name>pRL10</name>
</geneLocation>
<feature type="chain" id="PRO_0000272606" description="Nod factor export ATP-binding protein I">
    <location>
        <begin position="1"/>
        <end position="311"/>
    </location>
</feature>
<feature type="domain" description="ABC transporter" evidence="1">
    <location>
        <begin position="13"/>
        <end position="243"/>
    </location>
</feature>
<feature type="binding site" evidence="1">
    <location>
        <begin position="45"/>
        <end position="52"/>
    </location>
    <ligand>
        <name>ATP</name>
        <dbReference type="ChEBI" id="CHEBI:30616"/>
    </ligand>
</feature>